<organism>
    <name type="scientific">Azorhizobium caulinodans (strain ATCC 43989 / DSM 5975 / JCM 20966 / LMG 6465 / NBRC 14845 / NCIMB 13405 / ORS 571)</name>
    <dbReference type="NCBI Taxonomy" id="438753"/>
    <lineage>
        <taxon>Bacteria</taxon>
        <taxon>Pseudomonadati</taxon>
        <taxon>Pseudomonadota</taxon>
        <taxon>Alphaproteobacteria</taxon>
        <taxon>Hyphomicrobiales</taxon>
        <taxon>Xanthobacteraceae</taxon>
        <taxon>Azorhizobium</taxon>
    </lineage>
</organism>
<evidence type="ECO:0000255" key="1">
    <source>
        <dbReference type="HAMAP-Rule" id="MF_01959"/>
    </source>
</evidence>
<evidence type="ECO:0000256" key="2">
    <source>
        <dbReference type="SAM" id="MobiDB-lite"/>
    </source>
</evidence>
<feature type="chain" id="PRO_1000189004" description="Cytochrome c-type biogenesis protein CcmE">
    <location>
        <begin position="1"/>
        <end position="174"/>
    </location>
</feature>
<feature type="topological domain" description="Cytoplasmic" evidence="1">
    <location>
        <begin position="1"/>
        <end position="7"/>
    </location>
</feature>
<feature type="transmembrane region" description="Helical; Signal-anchor for type II membrane protein" evidence="1">
    <location>
        <begin position="8"/>
        <end position="28"/>
    </location>
</feature>
<feature type="topological domain" description="Periplasmic" evidence="1">
    <location>
        <begin position="29"/>
        <end position="174"/>
    </location>
</feature>
<feature type="region of interest" description="Disordered" evidence="2">
    <location>
        <begin position="130"/>
        <end position="174"/>
    </location>
</feature>
<feature type="compositionally biased region" description="Basic and acidic residues" evidence="2">
    <location>
        <begin position="130"/>
        <end position="144"/>
    </location>
</feature>
<feature type="compositionally biased region" description="Low complexity" evidence="2">
    <location>
        <begin position="156"/>
        <end position="174"/>
    </location>
</feature>
<feature type="binding site" description="covalent" evidence="1">
    <location>
        <position position="121"/>
    </location>
    <ligand>
        <name>heme</name>
        <dbReference type="ChEBI" id="CHEBI:30413"/>
    </ligand>
</feature>
<feature type="binding site" description="axial binding residue" evidence="1">
    <location>
        <position position="125"/>
    </location>
    <ligand>
        <name>heme</name>
        <dbReference type="ChEBI" id="CHEBI:30413"/>
    </ligand>
    <ligandPart>
        <name>Fe</name>
        <dbReference type="ChEBI" id="CHEBI:18248"/>
    </ligandPart>
</feature>
<sequence length="174" mass="17960">MTRKSRRLILIGAGLGVLALAAGLILTALNDTIVFFRTPTEVAQQQIAPGARLRLGGLVEPGSVAKSGASVRFAVTDGNSKVTVAYTGLLPDLFREGQGVVAEGVLQSDGTVKADSVLAKHDERYMPREVADALKKSGHWKEGEEGGPVPPAAKTPGPQSSAAPPAVSPARSTP</sequence>
<comment type="function">
    <text evidence="1">Heme chaperone required for the biogenesis of c-type cytochromes. Transiently binds heme delivered by CcmC and transfers the heme to apo-cytochromes in a process facilitated by CcmF and CcmH.</text>
</comment>
<comment type="subcellular location">
    <subcellularLocation>
        <location evidence="1">Cell inner membrane</location>
        <topology evidence="1">Single-pass type II membrane protein</topology>
        <orientation evidence="1">Periplasmic side</orientation>
    </subcellularLocation>
</comment>
<comment type="similarity">
    <text evidence="1">Belongs to the CcmE/CycJ family.</text>
</comment>
<name>CCME_AZOC5</name>
<protein>
    <recommendedName>
        <fullName evidence="1">Cytochrome c-type biogenesis protein CcmE</fullName>
    </recommendedName>
    <alternativeName>
        <fullName evidence="1">Cytochrome c maturation protein E</fullName>
    </alternativeName>
    <alternativeName>
        <fullName evidence="1">Heme chaperone CcmE</fullName>
    </alternativeName>
</protein>
<gene>
    <name evidence="1" type="primary">ccmE</name>
    <name evidence="1" type="synonym">cycJ</name>
    <name type="ordered locus">AZC_1133</name>
</gene>
<keyword id="KW-0997">Cell inner membrane</keyword>
<keyword id="KW-1003">Cell membrane</keyword>
<keyword id="KW-0201">Cytochrome c-type biogenesis</keyword>
<keyword id="KW-0349">Heme</keyword>
<keyword id="KW-0408">Iron</keyword>
<keyword id="KW-0472">Membrane</keyword>
<keyword id="KW-0479">Metal-binding</keyword>
<keyword id="KW-1185">Reference proteome</keyword>
<keyword id="KW-0735">Signal-anchor</keyword>
<keyword id="KW-0812">Transmembrane</keyword>
<keyword id="KW-1133">Transmembrane helix</keyword>
<proteinExistence type="inferred from homology"/>
<accession>A8HR72</accession>
<reference key="1">
    <citation type="submission" date="2007-04" db="EMBL/GenBank/DDBJ databases">
        <title>Complete genome sequence of the nitrogen-fixing bacterium Azorhizobium caulinodans ORS571.</title>
        <authorList>
            <person name="Lee K.B."/>
            <person name="Backer P.D."/>
            <person name="Aono T."/>
            <person name="Liu C.T."/>
            <person name="Suzuki S."/>
            <person name="Suzuki T."/>
            <person name="Kaneko T."/>
            <person name="Yamada M."/>
            <person name="Tabata S."/>
            <person name="Kupfer D.M."/>
            <person name="Najar F.Z."/>
            <person name="Wiley G.B."/>
            <person name="Roe B."/>
            <person name="Binnewies T."/>
            <person name="Ussery D."/>
            <person name="Vereecke D."/>
            <person name="Gevers D."/>
            <person name="Holsters M."/>
            <person name="Oyaizu H."/>
        </authorList>
    </citation>
    <scope>NUCLEOTIDE SEQUENCE [LARGE SCALE GENOMIC DNA]</scope>
    <source>
        <strain>ATCC 43989 / DSM 5975 / JCM 20966 / LMG 6465 / NBRC 14845 / NCIMB 13405 / ORS 571</strain>
    </source>
</reference>
<dbReference type="EMBL" id="AP009384">
    <property type="protein sequence ID" value="BAF87131.1"/>
    <property type="molecule type" value="Genomic_DNA"/>
</dbReference>
<dbReference type="RefSeq" id="WP_012169664.1">
    <property type="nucleotide sequence ID" value="NC_009937.1"/>
</dbReference>
<dbReference type="SMR" id="A8HR72"/>
<dbReference type="STRING" id="438753.AZC_1133"/>
<dbReference type="KEGG" id="azc:AZC_1133"/>
<dbReference type="eggNOG" id="COG2332">
    <property type="taxonomic scope" value="Bacteria"/>
</dbReference>
<dbReference type="HOGENOM" id="CLU_079503_1_1_5"/>
<dbReference type="Proteomes" id="UP000000270">
    <property type="component" value="Chromosome"/>
</dbReference>
<dbReference type="GO" id="GO:0005886">
    <property type="term" value="C:plasma membrane"/>
    <property type="evidence" value="ECO:0007669"/>
    <property type="project" value="UniProtKB-SubCell"/>
</dbReference>
<dbReference type="GO" id="GO:0020037">
    <property type="term" value="F:heme binding"/>
    <property type="evidence" value="ECO:0007669"/>
    <property type="project" value="InterPro"/>
</dbReference>
<dbReference type="GO" id="GO:0046872">
    <property type="term" value="F:metal ion binding"/>
    <property type="evidence" value="ECO:0007669"/>
    <property type="project" value="UniProtKB-KW"/>
</dbReference>
<dbReference type="GO" id="GO:0017004">
    <property type="term" value="P:cytochrome complex assembly"/>
    <property type="evidence" value="ECO:0007669"/>
    <property type="project" value="UniProtKB-KW"/>
</dbReference>
<dbReference type="FunFam" id="2.40.50.140:FF:000104">
    <property type="entry name" value="Cytochrome c-type biogenesis protein CcmE"/>
    <property type="match status" value="1"/>
</dbReference>
<dbReference type="Gene3D" id="2.40.50.140">
    <property type="entry name" value="Nucleic acid-binding proteins"/>
    <property type="match status" value="1"/>
</dbReference>
<dbReference type="HAMAP" id="MF_01959">
    <property type="entry name" value="CcmE"/>
    <property type="match status" value="1"/>
</dbReference>
<dbReference type="InterPro" id="IPR004329">
    <property type="entry name" value="CcmE"/>
</dbReference>
<dbReference type="InterPro" id="IPR036127">
    <property type="entry name" value="CcmE-like_sf"/>
</dbReference>
<dbReference type="InterPro" id="IPR012340">
    <property type="entry name" value="NA-bd_OB-fold"/>
</dbReference>
<dbReference type="NCBIfam" id="NF009727">
    <property type="entry name" value="PRK13254.1-1"/>
    <property type="match status" value="1"/>
</dbReference>
<dbReference type="NCBIfam" id="NF009729">
    <property type="entry name" value="PRK13254.1-3"/>
    <property type="match status" value="1"/>
</dbReference>
<dbReference type="NCBIfam" id="NF009731">
    <property type="entry name" value="PRK13254.1-5"/>
    <property type="match status" value="1"/>
</dbReference>
<dbReference type="PANTHER" id="PTHR34128">
    <property type="entry name" value="CYTOCHROME C-TYPE BIOGENESIS PROTEIN CCME HOMOLOG, MITOCHONDRIAL"/>
    <property type="match status" value="1"/>
</dbReference>
<dbReference type="PANTHER" id="PTHR34128:SF2">
    <property type="entry name" value="CYTOCHROME C-TYPE BIOGENESIS PROTEIN CCME HOMOLOG, MITOCHONDRIAL"/>
    <property type="match status" value="1"/>
</dbReference>
<dbReference type="Pfam" id="PF03100">
    <property type="entry name" value="CcmE"/>
    <property type="match status" value="1"/>
</dbReference>
<dbReference type="SUPFAM" id="SSF82093">
    <property type="entry name" value="Heme chaperone CcmE"/>
    <property type="match status" value="1"/>
</dbReference>